<keyword id="KW-0511">Multifunctional enzyme</keyword>
<keyword id="KW-0596">Phosphopantetheine</keyword>
<keyword id="KW-0597">Phosphoprotein</keyword>
<keyword id="KW-0677">Repeat</keyword>
<keyword id="KW-0808">Transferase</keyword>
<sequence>MNHVTIKQSDTRADPFRVFIFGDQSSCNLSNLQLLLFKKSNVYLASFIDQVNLTLRHEVARLTAAERQSFPAFSSVQNLVARALKKDTSVALESTLATIYHLCCFINYFGDGQEAYPTGPTTHVSGLCIGALAAAAVSSSKSLAELVQAGIDAVRVSLKVGLLVARTAALFSHQESNGTSSSPWSYAVPDSQLPLALAEEAIESYQAKTNIPPLSLPYISAKGQNSWTVSGPPAIVQHFLETSQFEKTLRLTPLAVHAPYHAPHIFSAIDVQHIIRAVGPVSSFSSKLAFISSSSSRNLPTGLKFQDLLYRAVEDILILPLDLREAAENIRLVLEATDNVQQCALFPISTGVGPSLKQSFSSAMASRVSIVDCIMERVAADAGPKSTSGPKPSESKIAIIGMSGRFPESADVEAFWDLLHQGLDVHRPVPPDRFNGELYYDVTGKRKNTCKVMHGCWINDPGLFDAKFFNISPKEAEQSDPGQRLALATAYEALEAAGVVADRTPSTQRDRVGVFYGMTSDDYREVSCGQNVDTYFIPGGNRAFTPGKINYFFKYCGPSVSVDTACSSSLAAIHLACNSIWRNECDTAIAGGTNVMSNPDSFVGLDRGYFLSRTGNCHTFDDEADGYCRADAVGTVILKRLEDAIADHDPILGVISGALTNHSADAVSITRPHSGAQEEIFSKLLTESGVHPHQVSYIEMHGTGTQAGDATEMTSVLNCFAPSTSPRRLPHESLHLGSTKANVGHSESASGVSALIKVLLMMEKNIIPPHCGIKGKINHKFPTDLDERNVHIAKTATQWNRRNELNNIRRAFVNNFSAAGGNTALLVEDYPLLIADSSQQDARTAHVVTVSAKSIKSLKGNLENLKKFVQKQASTEGFLPKLSYTTTSRRMHHPFRVAIPAANSEQLLSALDEELKHDSYTCCSESPVAFVFSGQGSQYSSMGQHLLHFTIFRDEVHAYDILAQRHGFPSIMPLIDGSVDIEDLEPLVVQLGTVCVQMALASLWMALGMRPAYVVGHSLGHYAALKVAGVLTASDTIYLVAMRARLLQNKCSRGSHAMLAIRSSVAEIQAHLDEGIYDIACINGPQDTVVSGCIDDIDRLSQKLMDKGIKATRVNVPFAFHSAQVDPILDELEAIASQVEFHAPRVAVGCPLLGKTFKAGETPSLEAKHIRRHCRETVNFLDVLRSAKDDGFVSDKTAWIEIGPHTVCSNLVKANINQDITAVPSLMRNKDGWQVLASSVATLYRHGSSVAWDEYHHDFEACKQVLRLPAYSWDNKLYWIDYVHDWLLTRGDPPVQAAASLPAPPLTFSTASVHRIVHESVEKGKLTLTAECEFTNEQLREVVYGHVVNGNRVCSSSLYTDFGVTLGSYILEKYRPDLQGHAVDVQDMVVNKALVHKEGPTMLLRIDVVLDTTDSKAASMSIYSVNSKGNKTADHAQSSLHFEQPKVWLKSWDSTQYYVERSIEWLKEKADQGLNSRMSSGVIYKLFSSLVDYSTAYKGMQEAIVNTEDFEATALVRFQVDEGNFRCNPMWVDSCGQLAGFLMNGHAKTPKDQVFINHGWQYFRTVRKFSRDKTYRTYVRMRCVEGTTYAGDVYIFDDEGIVGVCGSITFQGIPRKVLNTAMPPPKSQNEAPVRSGPAKPAAKPPRSASSEHSGHFARHANIEPLKLDAALKSATTARNPMLPVFKIVAEEIGIPSASVDNGLVFADYGVDSLLSLSISGRLREELDLDVESSAFETCATLADLAAHLGLDTFSSDQSSGQSSSFGGLSPRSDSIGEITSSVTTPPSLSPRSSVSGSQCKDVCAILAEEIGVSMGEITNDTDLGALGMDSLMSLAVLSRLREELELDLEGDFFVSHPNFSSFKHMFQQGHGDEVGPEPSAELKQYRATSTLLQGSPKSALYTLFLLPDGSGSSFSYAPINAVRKDVCVFGLNCPWLKSAEKLVQFGLKGLATLYVEEIRRRAPHGPYNLGGWSAGGICAYEAAIQFTREGETVERLILLDSPNPIGLEKLPARLFDFVNGLGLFGDGKAPDWLLAHFLAFIDALDEWKPVPWDKALGGNSPPPMTYILWAEDGICKGTDARPEYRDDDPREMKWLLENRTNFGGNNWDVLLGQQSLSIERIQDANHFTMLRKGKNTERVAAFIRSTFG</sequence>
<gene>
    <name evidence="11" type="primary">Pks1</name>
    <name type="ORF">MAN_10475</name>
</gene>
<evidence type="ECO:0000250" key="1">
    <source>
        <dbReference type="UniProtKB" id="E9F646"/>
    </source>
</evidence>
<evidence type="ECO:0000250" key="2">
    <source>
        <dbReference type="UniProtKB" id="Q03149"/>
    </source>
</evidence>
<evidence type="ECO:0000255" key="3"/>
<evidence type="ECO:0000255" key="4">
    <source>
        <dbReference type="PROSITE-ProRule" id="PRU00258"/>
    </source>
</evidence>
<evidence type="ECO:0000255" key="5">
    <source>
        <dbReference type="PROSITE-ProRule" id="PRU01348"/>
    </source>
</evidence>
<evidence type="ECO:0000255" key="6">
    <source>
        <dbReference type="PROSITE-ProRule" id="PRU01363"/>
    </source>
</evidence>
<evidence type="ECO:0000255" key="7">
    <source>
        <dbReference type="PROSITE-ProRule" id="PRU10022"/>
    </source>
</evidence>
<evidence type="ECO:0000256" key="8">
    <source>
        <dbReference type="SAM" id="MobiDB-lite"/>
    </source>
</evidence>
<evidence type="ECO:0000269" key="9">
    <source>
    </source>
</evidence>
<evidence type="ECO:0000269" key="10">
    <source>
    </source>
</evidence>
<evidence type="ECO:0000303" key="11">
    <source>
    </source>
</evidence>
<evidence type="ECO:0000305" key="12">
    <source>
    </source>
</evidence>
<protein>
    <recommendedName>
        <fullName evidence="11">Polyketide synthase 1</fullName>
        <ecNumber evidence="10">2.3.1.-</ecNumber>
    </recommendedName>
    <alternativeName>
        <fullName evidence="11">Conidial pigment biosynthesis polyketide synthase</fullName>
    </alternativeName>
</protein>
<name>PKS1_METAF</name>
<reference key="1">
    <citation type="journal article" date="2014" name="Proc. Natl. Acad. Sci. U.S.A.">
        <title>Trajectory and genomic determinants of fungal-pathogen speciation and host adaptation.</title>
        <authorList>
            <person name="Hu X."/>
            <person name="Xiao G."/>
            <person name="Zheng P."/>
            <person name="Shang Y."/>
            <person name="Su Y."/>
            <person name="Zhang X."/>
            <person name="Liu X."/>
            <person name="Zhan S."/>
            <person name="St Leger R.J."/>
            <person name="Wang C."/>
        </authorList>
    </citation>
    <scope>NUCLEOTIDE SEQUENCE [LARGE SCALE GENOMIC DNA]</scope>
    <source>
        <strain>ARSEF 549</strain>
    </source>
</reference>
<reference key="2">
    <citation type="journal article" date="2010" name="Fungal Genet. Biol.">
        <title>A laccase exclusively expressed by Metarhizium anisopliae during isotropic growth is involved in pigmentation, tolerance to abiotic stresses and virulence.</title>
        <authorList>
            <person name="Fang W."/>
            <person name="Fernandes E.K."/>
            <person name="Roberts D.W."/>
            <person name="Bidochka M.J."/>
            <person name="St Leger R.J."/>
        </authorList>
    </citation>
    <scope>FUNCTION</scope>
</reference>
<reference key="3">
    <citation type="journal article" date="2018" name="PLoS Genet.">
        <title>Duplication of a Pks gene cluster and subsequent functional diversification facilitate environmental adaptation in Metarhizium species.</title>
        <authorList>
            <person name="Zeng G."/>
            <person name="Zhang P."/>
            <person name="Zhang Q."/>
            <person name="Zhao H."/>
            <person name="Li Z."/>
            <person name="Zhang X."/>
            <person name="Wang C."/>
            <person name="Yin W.B."/>
            <person name="Fang W."/>
        </authorList>
    </citation>
    <scope>IDENTIFICATION</scope>
    <scope>DISRUPTION PHENOTYPE</scope>
    <scope>FUNCTION</scope>
    <scope>CATALYTIC ACTIVITY</scope>
    <scope>INDUCTION</scope>
    <scope>DOMAIN</scope>
</reference>
<proteinExistence type="evidence at protein level"/>
<dbReference type="EC" id="2.3.1.-" evidence="10"/>
<dbReference type="EMBL" id="AZNF01000025">
    <property type="protein sequence ID" value="KID59669.1"/>
    <property type="molecule type" value="Genomic_DNA"/>
</dbReference>
<dbReference type="SMR" id="A0A0B4FTU6"/>
<dbReference type="ESTHER" id="metaf-pks1">
    <property type="family name" value="Thioesterase"/>
</dbReference>
<dbReference type="VEuPathDB" id="FungiDB:MAN_10475"/>
<dbReference type="HOGENOM" id="CLU_000022_6_0_1"/>
<dbReference type="OrthoDB" id="4677at5529"/>
<dbReference type="Proteomes" id="UP000031186">
    <property type="component" value="Unassembled WGS sequence"/>
</dbReference>
<dbReference type="GO" id="GO:0004315">
    <property type="term" value="F:3-oxoacyl-[acyl-carrier-protein] synthase activity"/>
    <property type="evidence" value="ECO:0007669"/>
    <property type="project" value="InterPro"/>
</dbReference>
<dbReference type="GO" id="GO:0004312">
    <property type="term" value="F:fatty acid synthase activity"/>
    <property type="evidence" value="ECO:0007669"/>
    <property type="project" value="TreeGrafter"/>
</dbReference>
<dbReference type="GO" id="GO:0031177">
    <property type="term" value="F:phosphopantetheine binding"/>
    <property type="evidence" value="ECO:0007669"/>
    <property type="project" value="InterPro"/>
</dbReference>
<dbReference type="GO" id="GO:0006633">
    <property type="term" value="P:fatty acid biosynthetic process"/>
    <property type="evidence" value="ECO:0007669"/>
    <property type="project" value="InterPro"/>
</dbReference>
<dbReference type="GO" id="GO:0044550">
    <property type="term" value="P:secondary metabolite biosynthetic process"/>
    <property type="evidence" value="ECO:0007669"/>
    <property type="project" value="TreeGrafter"/>
</dbReference>
<dbReference type="CDD" id="cd00833">
    <property type="entry name" value="PKS"/>
    <property type="match status" value="1"/>
</dbReference>
<dbReference type="FunFam" id="3.40.366.10:FF:000002">
    <property type="entry name" value="Probable polyketide synthase 2"/>
    <property type="match status" value="1"/>
</dbReference>
<dbReference type="FunFam" id="3.10.129.110:FF:000001">
    <property type="entry name" value="Sterigmatocystin biosynthesis polyketide synthase"/>
    <property type="match status" value="1"/>
</dbReference>
<dbReference type="FunFam" id="3.40.47.10:FF:000031">
    <property type="entry name" value="Sterigmatocystin biosynthesis polyketide synthase"/>
    <property type="match status" value="1"/>
</dbReference>
<dbReference type="FunFam" id="3.40.50.1820:FF:000116">
    <property type="entry name" value="Sterigmatocystin biosynthesis polyketide synthase"/>
    <property type="match status" value="1"/>
</dbReference>
<dbReference type="Gene3D" id="3.30.70.3290">
    <property type="match status" value="1"/>
</dbReference>
<dbReference type="Gene3D" id="3.40.47.10">
    <property type="match status" value="1"/>
</dbReference>
<dbReference type="Gene3D" id="1.10.1200.10">
    <property type="entry name" value="ACP-like"/>
    <property type="match status" value="2"/>
</dbReference>
<dbReference type="Gene3D" id="3.40.50.1820">
    <property type="entry name" value="alpha/beta hydrolase"/>
    <property type="match status" value="1"/>
</dbReference>
<dbReference type="Gene3D" id="3.40.366.10">
    <property type="entry name" value="Malonyl-Coenzyme A Acyl Carrier Protein, domain 2"/>
    <property type="match status" value="2"/>
</dbReference>
<dbReference type="Gene3D" id="3.10.129.110">
    <property type="entry name" value="Polyketide synthase dehydratase"/>
    <property type="match status" value="1"/>
</dbReference>
<dbReference type="InterPro" id="IPR029058">
    <property type="entry name" value="AB_hydrolase_fold"/>
</dbReference>
<dbReference type="InterPro" id="IPR001227">
    <property type="entry name" value="Ac_transferase_dom_sf"/>
</dbReference>
<dbReference type="InterPro" id="IPR036736">
    <property type="entry name" value="ACP-like_sf"/>
</dbReference>
<dbReference type="InterPro" id="IPR014043">
    <property type="entry name" value="Acyl_transferase_dom"/>
</dbReference>
<dbReference type="InterPro" id="IPR016035">
    <property type="entry name" value="Acyl_Trfase/lysoPLipase"/>
</dbReference>
<dbReference type="InterPro" id="IPR018201">
    <property type="entry name" value="Ketoacyl_synth_AS"/>
</dbReference>
<dbReference type="InterPro" id="IPR014031">
    <property type="entry name" value="Ketoacyl_synth_C"/>
</dbReference>
<dbReference type="InterPro" id="IPR014030">
    <property type="entry name" value="Ketoacyl_synth_N"/>
</dbReference>
<dbReference type="InterPro" id="IPR016036">
    <property type="entry name" value="Malonyl_transacylase_ACP-bd"/>
</dbReference>
<dbReference type="InterPro" id="IPR020841">
    <property type="entry name" value="PKS_Beta-ketoAc_synthase_dom"/>
</dbReference>
<dbReference type="InterPro" id="IPR042104">
    <property type="entry name" value="PKS_dehydratase_sf"/>
</dbReference>
<dbReference type="InterPro" id="IPR049900">
    <property type="entry name" value="PKS_mFAS_DH"/>
</dbReference>
<dbReference type="InterPro" id="IPR050091">
    <property type="entry name" value="PKS_NRPS_Biosynth_Enz"/>
</dbReference>
<dbReference type="InterPro" id="IPR020806">
    <property type="entry name" value="PKS_PP-bd"/>
</dbReference>
<dbReference type="InterPro" id="IPR009081">
    <property type="entry name" value="PP-bd_ACP"/>
</dbReference>
<dbReference type="InterPro" id="IPR006162">
    <property type="entry name" value="Ppantetheine_attach_site"/>
</dbReference>
<dbReference type="InterPro" id="IPR030918">
    <property type="entry name" value="PT_fungal_PKS"/>
</dbReference>
<dbReference type="InterPro" id="IPR032088">
    <property type="entry name" value="SAT"/>
</dbReference>
<dbReference type="InterPro" id="IPR001031">
    <property type="entry name" value="Thioesterase"/>
</dbReference>
<dbReference type="InterPro" id="IPR016039">
    <property type="entry name" value="Thiolase-like"/>
</dbReference>
<dbReference type="NCBIfam" id="TIGR04532">
    <property type="entry name" value="PT_fungal_PKS"/>
    <property type="match status" value="1"/>
</dbReference>
<dbReference type="PANTHER" id="PTHR43775:SF45">
    <property type="entry name" value="CONIDIAL PIGMENT POLYKETIDE SYNTHASE ALB1"/>
    <property type="match status" value="1"/>
</dbReference>
<dbReference type="PANTHER" id="PTHR43775">
    <property type="entry name" value="FATTY ACID SYNTHASE"/>
    <property type="match status" value="1"/>
</dbReference>
<dbReference type="Pfam" id="PF00698">
    <property type="entry name" value="Acyl_transf_1"/>
    <property type="match status" value="1"/>
</dbReference>
<dbReference type="Pfam" id="PF22621">
    <property type="entry name" value="CurL-like_PKS_C"/>
    <property type="match status" value="1"/>
</dbReference>
<dbReference type="Pfam" id="PF00109">
    <property type="entry name" value="ketoacyl-synt"/>
    <property type="match status" value="1"/>
</dbReference>
<dbReference type="Pfam" id="PF02801">
    <property type="entry name" value="Ketoacyl-synt_C"/>
    <property type="match status" value="1"/>
</dbReference>
<dbReference type="Pfam" id="PF00550">
    <property type="entry name" value="PP-binding"/>
    <property type="match status" value="2"/>
</dbReference>
<dbReference type="Pfam" id="PF16073">
    <property type="entry name" value="SAT"/>
    <property type="match status" value="1"/>
</dbReference>
<dbReference type="Pfam" id="PF00975">
    <property type="entry name" value="Thioesterase"/>
    <property type="match status" value="1"/>
</dbReference>
<dbReference type="SMART" id="SM00827">
    <property type="entry name" value="PKS_AT"/>
    <property type="match status" value="1"/>
</dbReference>
<dbReference type="SMART" id="SM00825">
    <property type="entry name" value="PKS_KS"/>
    <property type="match status" value="1"/>
</dbReference>
<dbReference type="SMART" id="SM00823">
    <property type="entry name" value="PKS_PP"/>
    <property type="match status" value="2"/>
</dbReference>
<dbReference type="SUPFAM" id="SSF47336">
    <property type="entry name" value="ACP-like"/>
    <property type="match status" value="2"/>
</dbReference>
<dbReference type="SUPFAM" id="SSF53474">
    <property type="entry name" value="alpha/beta-Hydrolases"/>
    <property type="match status" value="1"/>
</dbReference>
<dbReference type="SUPFAM" id="SSF52151">
    <property type="entry name" value="FabD/lysophospholipase-like"/>
    <property type="match status" value="1"/>
</dbReference>
<dbReference type="SUPFAM" id="SSF55048">
    <property type="entry name" value="Probable ACP-binding domain of malonyl-CoA ACP transacylase"/>
    <property type="match status" value="1"/>
</dbReference>
<dbReference type="SUPFAM" id="SSF53901">
    <property type="entry name" value="Thiolase-like"/>
    <property type="match status" value="1"/>
</dbReference>
<dbReference type="PROSITE" id="PS50075">
    <property type="entry name" value="CARRIER"/>
    <property type="match status" value="2"/>
</dbReference>
<dbReference type="PROSITE" id="PS00606">
    <property type="entry name" value="KS3_1"/>
    <property type="match status" value="1"/>
</dbReference>
<dbReference type="PROSITE" id="PS52004">
    <property type="entry name" value="KS3_2"/>
    <property type="match status" value="1"/>
</dbReference>
<dbReference type="PROSITE" id="PS00012">
    <property type="entry name" value="PHOSPHOPANTETHEINE"/>
    <property type="match status" value="1"/>
</dbReference>
<dbReference type="PROSITE" id="PS52019">
    <property type="entry name" value="PKS_MFAS_DH"/>
    <property type="match status" value="1"/>
</dbReference>
<organism>
    <name type="scientific">Metarhizium anisopliae (strain ARSEF 549)</name>
    <dbReference type="NCBI Taxonomy" id="3151832"/>
    <lineage>
        <taxon>Eukaryota</taxon>
        <taxon>Fungi</taxon>
        <taxon>Dikarya</taxon>
        <taxon>Ascomycota</taxon>
        <taxon>Pezizomycotina</taxon>
        <taxon>Sordariomycetes</taxon>
        <taxon>Hypocreomycetidae</taxon>
        <taxon>Hypocreales</taxon>
        <taxon>Clavicipitaceae</taxon>
        <taxon>Metarhizium</taxon>
    </lineage>
</organism>
<comment type="function">
    <text evidence="1 9 10">Polyketide synthase; part of the Pks1 gene cluster that mediates the biosynthesis of an anthraquinone derivative pigment that contributes to conidial pigmentation that provides protection from UV radiation, heat and cold stress (PubMed:29958281). The polyketide synthase Pks1 produces 1-acetyl-2,4,6,8-tetrahydroxy-9,10-anthraquinone though condensation of acetyl-CoA with malonyl-CoA (By similarity). The dehydratase EthD and the laccase Mlac1 further convert the anthraquinone derivative into the final conidial pigment (PubMed:20382249).</text>
</comment>
<comment type="induction">
    <text evidence="1 10">Highly expressed during conidiation (PubMed:29958281). A conserved conidiation regulatory pathway containing BrlA, AbaA and WetA regulates expression. During conidiation BlrA up-regulates AbaA, which in turn controls WetA. Moreover, the Hog1 MAPK regulates fungal conidiation by controlling the conidiation regulatory pathway, and that all three pigmentation genes Pks1, EthD and Mlac1 exercise feedback regulation of conidiation (By similarity).</text>
</comment>
<comment type="domain">
    <text evidence="12">Multidomain protein; including a starter unit:ACP transacylase (SAT) that selects the starter unit; a ketosynthase (KS) that catalyzes repeated decarboxylative condensation to elongate the polyketide backbone; a malonyl-CoA:ACP transacylase (MAT) that selects and transfers the extender unit malonyl-CoA; a product template (PT) domain that controls the immediate cyclization regioselectivity of the reactive polyketide backbone; and an acyl-carrier protein (ACP) that serves as the tether of the growing and completed polyketide via its phosphopantetheinyl arm.</text>
</comment>
<comment type="domain">
    <text evidence="12">The release of the polyketide chain from the non-reducing polyketide synthase is mediated by the thioesterase (TE) domain localized at the C-ter of the protein.</text>
</comment>
<comment type="disruption phenotype">
    <text evidence="10">Results in red conidia.</text>
</comment>
<accession>A0A0B4FTU6</accession>
<feature type="chain" id="PRO_0000445740" description="Polyketide synthase 1">
    <location>
        <begin position="1"/>
        <end position="2148"/>
    </location>
</feature>
<feature type="domain" description="Ketosynthase family 3 (KS3)" evidence="5 12">
    <location>
        <begin position="394"/>
        <end position="829"/>
    </location>
</feature>
<feature type="domain" description="PKS/mFAS DH" evidence="6">
    <location>
        <begin position="1314"/>
        <end position="1619"/>
    </location>
</feature>
<feature type="domain" description="Carrier 1" evidence="4 12">
    <location>
        <begin position="1678"/>
        <end position="1752"/>
    </location>
</feature>
<feature type="domain" description="Carrier 2" evidence="4 12">
    <location>
        <begin position="1793"/>
        <end position="1870"/>
    </location>
</feature>
<feature type="region of interest" description="N-terminal acylcarrier protein transacylase domain (SAT)" evidence="3 12">
    <location>
        <begin position="19"/>
        <end position="261"/>
    </location>
</feature>
<feature type="region of interest" description="Malonyl-CoA:ACP transacylase (MAT) domain" evidence="3 12">
    <location>
        <begin position="929"/>
        <end position="1233"/>
    </location>
</feature>
<feature type="region of interest" description="Product template (PT) domain" evidence="3 12">
    <location>
        <begin position="1310"/>
        <end position="1624"/>
    </location>
</feature>
<feature type="region of interest" description="N-terminal hotdog fold" evidence="6">
    <location>
        <begin position="1314"/>
        <end position="1447"/>
    </location>
</feature>
<feature type="region of interest" description="C-terminal hotdog fold" evidence="6">
    <location>
        <begin position="1474"/>
        <end position="1619"/>
    </location>
</feature>
<feature type="region of interest" description="Disordered" evidence="8">
    <location>
        <begin position="1619"/>
        <end position="1655"/>
    </location>
</feature>
<feature type="region of interest" description="Disordered" evidence="8">
    <location>
        <begin position="1757"/>
        <end position="1796"/>
    </location>
</feature>
<feature type="region of interest" description="Thioesterase (TE) domain" evidence="3 12">
    <location>
        <begin position="1882"/>
        <end position="2146"/>
    </location>
</feature>
<feature type="compositionally biased region" description="Low complexity" evidence="8">
    <location>
        <begin position="1634"/>
        <end position="1650"/>
    </location>
</feature>
<feature type="compositionally biased region" description="Low complexity" evidence="8">
    <location>
        <begin position="1757"/>
        <end position="1769"/>
    </location>
</feature>
<feature type="compositionally biased region" description="Low complexity" evidence="8">
    <location>
        <begin position="1779"/>
        <end position="1796"/>
    </location>
</feature>
<feature type="active site" description="For beta-ketoacyl synthase activity" evidence="5">
    <location>
        <position position="566"/>
    </location>
</feature>
<feature type="active site" description="For beta-ketoacyl synthase activity" evidence="5">
    <location>
        <position position="701"/>
    </location>
</feature>
<feature type="active site" description="For beta-ketoacyl synthase activity" evidence="5">
    <location>
        <position position="745"/>
    </location>
</feature>
<feature type="active site" description="For acyl/malonyl transferase activity" evidence="7">
    <location>
        <position position="1018"/>
    </location>
</feature>
<feature type="active site" description="Proton acceptor; for dehydratase activity" evidence="6">
    <location>
        <position position="1346"/>
    </location>
</feature>
<feature type="active site" description="Proton donor; for dehydratase activity" evidence="6">
    <location>
        <position position="1533"/>
    </location>
</feature>
<feature type="active site" description="For thioesterase activity" evidence="2">
    <location>
        <position position="1973"/>
    </location>
</feature>
<feature type="modified residue" description="O-(pantetheine 4'-phosphoryl)serine" evidence="4">
    <location>
        <position position="1712"/>
    </location>
</feature>
<feature type="modified residue" description="O-(pantetheine 4'-phosphoryl)serine" evidence="4">
    <location>
        <position position="1830"/>
    </location>
</feature>